<feature type="chain" id="PRO_0000077085" description="Large ribosomal subunit protein uL3">
    <location>
        <begin position="1"/>
        <end position="221"/>
    </location>
</feature>
<evidence type="ECO:0000255" key="1">
    <source>
        <dbReference type="HAMAP-Rule" id="MF_01325"/>
    </source>
</evidence>
<evidence type="ECO:0000305" key="2"/>
<organism>
    <name type="scientific">Chlamydia muridarum (strain MoPn / Nigg)</name>
    <dbReference type="NCBI Taxonomy" id="243161"/>
    <lineage>
        <taxon>Bacteria</taxon>
        <taxon>Pseudomonadati</taxon>
        <taxon>Chlamydiota</taxon>
        <taxon>Chlamydiia</taxon>
        <taxon>Chlamydiales</taxon>
        <taxon>Chlamydiaceae</taxon>
        <taxon>Chlamydia/Chlamydophila group</taxon>
        <taxon>Chlamydia</taxon>
    </lineage>
</organism>
<accession>Q9PJL4</accession>
<sequence length="221" mass="23487">MRSQLSLIGKKEGMMHVFDKNGNLVACSVISIEPNVVAQLKTASSDGYNAVQMGADAVKAPEKTIEKRFSKALLGHFKKSGGCAFRVLKEVVVSEEAVQSVSLGDEFGVEIFDGVSNVDVCGISKGKGFQGVMKKFGFRGGPKSHGSGFHRHAGSIGMRSTPGRCFPGSKRPSHMGCDRVTVKNLEVVKVDLDRKVMLVKGAIPGFKGSVVVVKRSCGVEG</sequence>
<name>RL3_CHLMU</name>
<proteinExistence type="inferred from homology"/>
<gene>
    <name evidence="1" type="primary">rplC</name>
    <name type="ordered locus">TC_0815</name>
</gene>
<protein>
    <recommendedName>
        <fullName evidence="1">Large ribosomal subunit protein uL3</fullName>
    </recommendedName>
    <alternativeName>
        <fullName evidence="2">50S ribosomal protein L3</fullName>
    </alternativeName>
</protein>
<comment type="function">
    <text evidence="1">One of the primary rRNA binding proteins, it binds directly near the 3'-end of the 23S rRNA, where it nucleates assembly of the 50S subunit.</text>
</comment>
<comment type="subunit">
    <text evidence="1">Part of the 50S ribosomal subunit. Forms a cluster with proteins L14 and L19.</text>
</comment>
<comment type="similarity">
    <text evidence="1">Belongs to the universal ribosomal protein uL3 family.</text>
</comment>
<reference key="1">
    <citation type="journal article" date="2000" name="Nucleic Acids Res.">
        <title>Genome sequences of Chlamydia trachomatis MoPn and Chlamydia pneumoniae AR39.</title>
        <authorList>
            <person name="Read T.D."/>
            <person name="Brunham R.C."/>
            <person name="Shen C."/>
            <person name="Gill S.R."/>
            <person name="Heidelberg J.F."/>
            <person name="White O."/>
            <person name="Hickey E.K."/>
            <person name="Peterson J.D."/>
            <person name="Utterback T.R."/>
            <person name="Berry K.J."/>
            <person name="Bass S."/>
            <person name="Linher K.D."/>
            <person name="Weidman J.F."/>
            <person name="Khouri H.M."/>
            <person name="Craven B."/>
            <person name="Bowman C."/>
            <person name="Dodson R.J."/>
            <person name="Gwinn M.L."/>
            <person name="Nelson W.C."/>
            <person name="DeBoy R.T."/>
            <person name="Kolonay J.F."/>
            <person name="McClarty G."/>
            <person name="Salzberg S.L."/>
            <person name="Eisen J.A."/>
            <person name="Fraser C.M."/>
        </authorList>
    </citation>
    <scope>NUCLEOTIDE SEQUENCE [LARGE SCALE GENOMIC DNA]</scope>
    <source>
        <strain>MoPn / Nigg</strain>
    </source>
</reference>
<dbReference type="EMBL" id="AE002160">
    <property type="protein sequence ID" value="AAF39617.1"/>
    <property type="molecule type" value="Genomic_DNA"/>
</dbReference>
<dbReference type="PIR" id="D81661">
    <property type="entry name" value="D81661"/>
</dbReference>
<dbReference type="RefSeq" id="WP_010231649.1">
    <property type="nucleotide sequence ID" value="NZ_CP063055.1"/>
</dbReference>
<dbReference type="SMR" id="Q9PJL4"/>
<dbReference type="GeneID" id="1246182"/>
<dbReference type="KEGG" id="cmu:TC_0815"/>
<dbReference type="eggNOG" id="COG0087">
    <property type="taxonomic scope" value="Bacteria"/>
</dbReference>
<dbReference type="HOGENOM" id="CLU_044142_4_1_0"/>
<dbReference type="OrthoDB" id="9806135at2"/>
<dbReference type="Proteomes" id="UP000000800">
    <property type="component" value="Chromosome"/>
</dbReference>
<dbReference type="GO" id="GO:0022625">
    <property type="term" value="C:cytosolic large ribosomal subunit"/>
    <property type="evidence" value="ECO:0007669"/>
    <property type="project" value="TreeGrafter"/>
</dbReference>
<dbReference type="GO" id="GO:0019843">
    <property type="term" value="F:rRNA binding"/>
    <property type="evidence" value="ECO:0007669"/>
    <property type="project" value="UniProtKB-UniRule"/>
</dbReference>
<dbReference type="GO" id="GO:0003735">
    <property type="term" value="F:structural constituent of ribosome"/>
    <property type="evidence" value="ECO:0007669"/>
    <property type="project" value="InterPro"/>
</dbReference>
<dbReference type="GO" id="GO:0006412">
    <property type="term" value="P:translation"/>
    <property type="evidence" value="ECO:0007669"/>
    <property type="project" value="UniProtKB-UniRule"/>
</dbReference>
<dbReference type="FunFam" id="2.40.30.10:FF:000004">
    <property type="entry name" value="50S ribosomal protein L3"/>
    <property type="match status" value="1"/>
</dbReference>
<dbReference type="Gene3D" id="3.30.160.810">
    <property type="match status" value="1"/>
</dbReference>
<dbReference type="Gene3D" id="2.40.30.10">
    <property type="entry name" value="Translation factors"/>
    <property type="match status" value="1"/>
</dbReference>
<dbReference type="HAMAP" id="MF_01325_B">
    <property type="entry name" value="Ribosomal_uL3_B"/>
    <property type="match status" value="1"/>
</dbReference>
<dbReference type="InterPro" id="IPR000597">
    <property type="entry name" value="Ribosomal_uL3"/>
</dbReference>
<dbReference type="InterPro" id="IPR019927">
    <property type="entry name" value="Ribosomal_uL3_bac/org-type"/>
</dbReference>
<dbReference type="InterPro" id="IPR009000">
    <property type="entry name" value="Transl_B-barrel_sf"/>
</dbReference>
<dbReference type="NCBIfam" id="TIGR03625">
    <property type="entry name" value="L3_bact"/>
    <property type="match status" value="1"/>
</dbReference>
<dbReference type="PANTHER" id="PTHR11229">
    <property type="entry name" value="50S RIBOSOMAL PROTEIN L3"/>
    <property type="match status" value="1"/>
</dbReference>
<dbReference type="PANTHER" id="PTHR11229:SF16">
    <property type="entry name" value="LARGE RIBOSOMAL SUBUNIT PROTEIN UL3C"/>
    <property type="match status" value="1"/>
</dbReference>
<dbReference type="Pfam" id="PF00297">
    <property type="entry name" value="Ribosomal_L3"/>
    <property type="match status" value="1"/>
</dbReference>
<dbReference type="SUPFAM" id="SSF50447">
    <property type="entry name" value="Translation proteins"/>
    <property type="match status" value="1"/>
</dbReference>
<keyword id="KW-0687">Ribonucleoprotein</keyword>
<keyword id="KW-0689">Ribosomal protein</keyword>
<keyword id="KW-0694">RNA-binding</keyword>
<keyword id="KW-0699">rRNA-binding</keyword>